<comment type="function">
    <text evidence="1">Involved in urease metallocenter assembly. Binds nickel. Probably functions as a nickel donor during metallocenter assembly.</text>
</comment>
<comment type="subcellular location">
    <subcellularLocation>
        <location evidence="1">Cytoplasm</location>
    </subcellularLocation>
</comment>
<comment type="similarity">
    <text evidence="1">Belongs to the UreE family.</text>
</comment>
<feature type="chain" id="PRO_1000197435" description="Urease accessory protein UreE">
    <location>
        <begin position="1"/>
        <end position="158"/>
    </location>
</feature>
<proteinExistence type="inferred from homology"/>
<reference key="1">
    <citation type="journal article" date="2008" name="J. Biotechnol.">
        <title>The lifestyle of Corynebacterium urealyticum derived from its complete genome sequence established by pyrosequencing.</title>
        <authorList>
            <person name="Tauch A."/>
            <person name="Trost E."/>
            <person name="Tilker A."/>
            <person name="Ludewig U."/>
            <person name="Schneiker S."/>
            <person name="Goesmann A."/>
            <person name="Arnold W."/>
            <person name="Bekel T."/>
            <person name="Brinkrolf K."/>
            <person name="Brune I."/>
            <person name="Goetker S."/>
            <person name="Kalinowski J."/>
            <person name="Kamp P.-B."/>
            <person name="Lobo F.P."/>
            <person name="Viehoever P."/>
            <person name="Weisshaar B."/>
            <person name="Soriano F."/>
            <person name="Droege M."/>
            <person name="Puehler A."/>
        </authorList>
    </citation>
    <scope>NUCLEOTIDE SEQUENCE [LARGE SCALE GENOMIC DNA]</scope>
    <source>
        <strain>ATCC 43042 / DSM 7109</strain>
    </source>
</reference>
<keyword id="KW-0143">Chaperone</keyword>
<keyword id="KW-0963">Cytoplasm</keyword>
<keyword id="KW-0533">Nickel</keyword>
<keyword id="KW-1185">Reference proteome</keyword>
<name>UREE_CORU7</name>
<accession>B1VHT3</accession>
<gene>
    <name evidence="1" type="primary">ureE</name>
    <name type="ordered locus">cu1774</name>
</gene>
<sequence length="158" mass="18207">MIITEILGNRAQLSADEIAQYTEEKVKLPNLDLVKRIQRVTTDADREIGLRLPSEVKELKDGDILYQNDSLLITVEVLPTDVLVYRPRNTLEMGKVAHSLGNRHLQAQFFGEDSEYGETVMVLQYDHTVEDHLKHVDAQYSREDRVMPEAFRHAEHSH</sequence>
<organism>
    <name type="scientific">Corynebacterium urealyticum (strain ATCC 43042 / DSM 7109)</name>
    <dbReference type="NCBI Taxonomy" id="504474"/>
    <lineage>
        <taxon>Bacteria</taxon>
        <taxon>Bacillati</taxon>
        <taxon>Actinomycetota</taxon>
        <taxon>Actinomycetes</taxon>
        <taxon>Mycobacteriales</taxon>
        <taxon>Corynebacteriaceae</taxon>
        <taxon>Corynebacterium</taxon>
    </lineage>
</organism>
<evidence type="ECO:0000255" key="1">
    <source>
        <dbReference type="HAMAP-Rule" id="MF_00822"/>
    </source>
</evidence>
<protein>
    <recommendedName>
        <fullName evidence="1">Urease accessory protein UreE</fullName>
    </recommendedName>
</protein>
<dbReference type="EMBL" id="AM942444">
    <property type="protein sequence ID" value="CAQ05733.1"/>
    <property type="molecule type" value="Genomic_DNA"/>
</dbReference>
<dbReference type="RefSeq" id="WP_012361009.1">
    <property type="nucleotide sequence ID" value="NC_010545.1"/>
</dbReference>
<dbReference type="SMR" id="B1VHT3"/>
<dbReference type="STRING" id="504474.cu1774"/>
<dbReference type="GeneID" id="60604557"/>
<dbReference type="KEGG" id="cur:cu1774"/>
<dbReference type="eggNOG" id="COG2371">
    <property type="taxonomic scope" value="Bacteria"/>
</dbReference>
<dbReference type="HOGENOM" id="CLU_093757_3_1_11"/>
<dbReference type="Proteomes" id="UP000001727">
    <property type="component" value="Chromosome"/>
</dbReference>
<dbReference type="GO" id="GO:0005737">
    <property type="term" value="C:cytoplasm"/>
    <property type="evidence" value="ECO:0007669"/>
    <property type="project" value="UniProtKB-SubCell"/>
</dbReference>
<dbReference type="GO" id="GO:0016151">
    <property type="term" value="F:nickel cation binding"/>
    <property type="evidence" value="ECO:0007669"/>
    <property type="project" value="UniProtKB-UniRule"/>
</dbReference>
<dbReference type="GO" id="GO:0051082">
    <property type="term" value="F:unfolded protein binding"/>
    <property type="evidence" value="ECO:0007669"/>
    <property type="project" value="UniProtKB-UniRule"/>
</dbReference>
<dbReference type="GO" id="GO:0006457">
    <property type="term" value="P:protein folding"/>
    <property type="evidence" value="ECO:0007669"/>
    <property type="project" value="InterPro"/>
</dbReference>
<dbReference type="GO" id="GO:0065003">
    <property type="term" value="P:protein-containing complex assembly"/>
    <property type="evidence" value="ECO:0007669"/>
    <property type="project" value="InterPro"/>
</dbReference>
<dbReference type="GO" id="GO:0019627">
    <property type="term" value="P:urea metabolic process"/>
    <property type="evidence" value="ECO:0007669"/>
    <property type="project" value="InterPro"/>
</dbReference>
<dbReference type="CDD" id="cd00571">
    <property type="entry name" value="UreE"/>
    <property type="match status" value="1"/>
</dbReference>
<dbReference type="Gene3D" id="2.60.260.20">
    <property type="entry name" value="Urease metallochaperone UreE, N-terminal domain"/>
    <property type="match status" value="1"/>
</dbReference>
<dbReference type="Gene3D" id="3.30.70.790">
    <property type="entry name" value="UreE, C-terminal domain"/>
    <property type="match status" value="1"/>
</dbReference>
<dbReference type="HAMAP" id="MF_00822">
    <property type="entry name" value="UreE"/>
    <property type="match status" value="1"/>
</dbReference>
<dbReference type="InterPro" id="IPR012406">
    <property type="entry name" value="UreE"/>
</dbReference>
<dbReference type="InterPro" id="IPR007864">
    <property type="entry name" value="UreE_C_dom"/>
</dbReference>
<dbReference type="InterPro" id="IPR004029">
    <property type="entry name" value="UreE_N"/>
</dbReference>
<dbReference type="InterPro" id="IPR036118">
    <property type="entry name" value="UreE_N_sf"/>
</dbReference>
<dbReference type="NCBIfam" id="NF009757">
    <property type="entry name" value="PRK13261.2-3"/>
    <property type="match status" value="1"/>
</dbReference>
<dbReference type="Pfam" id="PF05194">
    <property type="entry name" value="UreE_C"/>
    <property type="match status" value="1"/>
</dbReference>
<dbReference type="Pfam" id="PF02814">
    <property type="entry name" value="UreE_N"/>
    <property type="match status" value="1"/>
</dbReference>
<dbReference type="PIRSF" id="PIRSF036402">
    <property type="entry name" value="Ureas_acces_UreE"/>
    <property type="match status" value="1"/>
</dbReference>
<dbReference type="SMART" id="SM00988">
    <property type="entry name" value="UreE_N"/>
    <property type="match status" value="1"/>
</dbReference>
<dbReference type="SUPFAM" id="SSF69737">
    <property type="entry name" value="Urease metallochaperone UreE, C-terminal domain"/>
    <property type="match status" value="1"/>
</dbReference>
<dbReference type="SUPFAM" id="SSF69287">
    <property type="entry name" value="Urease metallochaperone UreE, N-terminal domain"/>
    <property type="match status" value="1"/>
</dbReference>